<keyword id="KW-0963">Cytoplasm</keyword>
<keyword id="KW-0690">Ribosome biogenesis</keyword>
<name>RIMP_SULNB</name>
<evidence type="ECO:0000255" key="1">
    <source>
        <dbReference type="HAMAP-Rule" id="MF_01077"/>
    </source>
</evidence>
<comment type="function">
    <text evidence="1">Required for maturation of 30S ribosomal subunits.</text>
</comment>
<comment type="subcellular location">
    <subcellularLocation>
        <location evidence="1">Cytoplasm</location>
    </subcellularLocation>
</comment>
<comment type="similarity">
    <text evidence="1">Belongs to the RimP family.</text>
</comment>
<feature type="chain" id="PRO_1000064786" description="Ribosome maturation factor RimP">
    <location>
        <begin position="1"/>
        <end position="142"/>
    </location>
</feature>
<protein>
    <recommendedName>
        <fullName evidence="1">Ribosome maturation factor RimP</fullName>
    </recommendedName>
</protein>
<gene>
    <name evidence="1" type="primary">rimP</name>
    <name type="ordered locus">SUN_1969</name>
</gene>
<proteinExistence type="inferred from homology"/>
<organism>
    <name type="scientific">Sulfurovum sp. (strain NBC37-1)</name>
    <dbReference type="NCBI Taxonomy" id="387093"/>
    <lineage>
        <taxon>Bacteria</taxon>
        <taxon>Pseudomonadati</taxon>
        <taxon>Campylobacterota</taxon>
        <taxon>Epsilonproteobacteria</taxon>
        <taxon>Campylobacterales</taxon>
        <taxon>Sulfurovaceae</taxon>
        <taxon>Sulfurovum</taxon>
    </lineage>
</organism>
<dbReference type="EMBL" id="AP009179">
    <property type="protein sequence ID" value="BAF72912.1"/>
    <property type="molecule type" value="Genomic_DNA"/>
</dbReference>
<dbReference type="RefSeq" id="WP_012083732.1">
    <property type="nucleotide sequence ID" value="NC_009663.1"/>
</dbReference>
<dbReference type="SMR" id="A6QBQ3"/>
<dbReference type="STRING" id="387093.SUN_1969"/>
<dbReference type="KEGG" id="sun:SUN_1969"/>
<dbReference type="eggNOG" id="COG0779">
    <property type="taxonomic scope" value="Bacteria"/>
</dbReference>
<dbReference type="HOGENOM" id="CLU_070525_2_2_7"/>
<dbReference type="OrthoDB" id="9805006at2"/>
<dbReference type="Proteomes" id="UP000006378">
    <property type="component" value="Chromosome"/>
</dbReference>
<dbReference type="GO" id="GO:0005829">
    <property type="term" value="C:cytosol"/>
    <property type="evidence" value="ECO:0007669"/>
    <property type="project" value="TreeGrafter"/>
</dbReference>
<dbReference type="GO" id="GO:0000028">
    <property type="term" value="P:ribosomal small subunit assembly"/>
    <property type="evidence" value="ECO:0007669"/>
    <property type="project" value="TreeGrafter"/>
</dbReference>
<dbReference type="GO" id="GO:0006412">
    <property type="term" value="P:translation"/>
    <property type="evidence" value="ECO:0007669"/>
    <property type="project" value="TreeGrafter"/>
</dbReference>
<dbReference type="CDD" id="cd01734">
    <property type="entry name" value="YlxS_C"/>
    <property type="match status" value="1"/>
</dbReference>
<dbReference type="Gene3D" id="2.30.30.180">
    <property type="entry name" value="Ribosome maturation factor RimP, C-terminal domain"/>
    <property type="match status" value="1"/>
</dbReference>
<dbReference type="Gene3D" id="3.30.300.70">
    <property type="entry name" value="RimP-like superfamily, N-terminal"/>
    <property type="match status" value="1"/>
</dbReference>
<dbReference type="HAMAP" id="MF_01077">
    <property type="entry name" value="RimP"/>
    <property type="match status" value="1"/>
</dbReference>
<dbReference type="InterPro" id="IPR003728">
    <property type="entry name" value="Ribosome_maturation_RimP"/>
</dbReference>
<dbReference type="InterPro" id="IPR028998">
    <property type="entry name" value="RimP_C"/>
</dbReference>
<dbReference type="InterPro" id="IPR036847">
    <property type="entry name" value="RimP_C_sf"/>
</dbReference>
<dbReference type="InterPro" id="IPR028989">
    <property type="entry name" value="RimP_N"/>
</dbReference>
<dbReference type="InterPro" id="IPR035956">
    <property type="entry name" value="RimP_N_sf"/>
</dbReference>
<dbReference type="NCBIfam" id="NF000936">
    <property type="entry name" value="PRK00092.4-1"/>
    <property type="match status" value="1"/>
</dbReference>
<dbReference type="PANTHER" id="PTHR33867">
    <property type="entry name" value="RIBOSOME MATURATION FACTOR RIMP"/>
    <property type="match status" value="1"/>
</dbReference>
<dbReference type="PANTHER" id="PTHR33867:SF1">
    <property type="entry name" value="RIBOSOME MATURATION FACTOR RIMP"/>
    <property type="match status" value="1"/>
</dbReference>
<dbReference type="Pfam" id="PF17384">
    <property type="entry name" value="DUF150_C"/>
    <property type="match status" value="1"/>
</dbReference>
<dbReference type="Pfam" id="PF02576">
    <property type="entry name" value="RimP_N"/>
    <property type="match status" value="1"/>
</dbReference>
<dbReference type="SUPFAM" id="SSF74942">
    <property type="entry name" value="YhbC-like, C-terminal domain"/>
    <property type="match status" value="1"/>
</dbReference>
<dbReference type="SUPFAM" id="SSF75420">
    <property type="entry name" value="YhbC-like, N-terminal domain"/>
    <property type="match status" value="1"/>
</dbReference>
<accession>A6QBQ3</accession>
<sequence length="142" mass="15677">MNLEAQISKIVEANGAALYDIETANEFDETIYRVLITKTGGVNLDLCATISNELSPFLDVHPPMNGHYRLEVSSPGIERKLSKPIHFQNAIGEKVKVKLLGGDKLKGVLKAADDKGITVETKQGEESYSYSDLGTVKTYFEW</sequence>
<reference key="1">
    <citation type="journal article" date="2007" name="Proc. Natl. Acad. Sci. U.S.A.">
        <title>Deep-sea vent epsilon-proteobacterial genomes provide insights into emergence of pathogens.</title>
        <authorList>
            <person name="Nakagawa S."/>
            <person name="Takaki Y."/>
            <person name="Shimamura S."/>
            <person name="Reysenbach A.-L."/>
            <person name="Takai K."/>
            <person name="Horikoshi K."/>
        </authorList>
    </citation>
    <scope>NUCLEOTIDE SEQUENCE [LARGE SCALE GENOMIC DNA]</scope>
    <source>
        <strain>NBC37-1</strain>
    </source>
</reference>